<gene>
    <name evidence="1" type="primary">leuS</name>
    <name type="ordered locus">Rleg2_3924</name>
</gene>
<feature type="chain" id="PRO_1000091351" description="Leucine--tRNA ligase">
    <location>
        <begin position="1"/>
        <end position="876"/>
    </location>
</feature>
<feature type="region of interest" description="Disordered" evidence="2">
    <location>
        <begin position="1"/>
        <end position="20"/>
    </location>
</feature>
<feature type="short sequence motif" description="'HIGH' region">
    <location>
        <begin position="43"/>
        <end position="53"/>
    </location>
</feature>
<feature type="short sequence motif" description="'KMSKS' region">
    <location>
        <begin position="632"/>
        <end position="636"/>
    </location>
</feature>
<feature type="binding site" evidence="1">
    <location>
        <position position="635"/>
    </location>
    <ligand>
        <name>ATP</name>
        <dbReference type="ChEBI" id="CHEBI:30616"/>
    </ligand>
</feature>
<proteinExistence type="inferred from homology"/>
<reference key="1">
    <citation type="journal article" date="2010" name="Stand. Genomic Sci.">
        <title>Complete genome sequence of Rhizobium leguminosarum bv trifolii strain WSM2304, an effective microsymbiont of the South American clover Trifolium polymorphum.</title>
        <authorList>
            <person name="Reeve W."/>
            <person name="O'Hara G."/>
            <person name="Chain P."/>
            <person name="Ardley J."/>
            <person name="Brau L."/>
            <person name="Nandesena K."/>
            <person name="Tiwari R."/>
            <person name="Malfatti S."/>
            <person name="Kiss H."/>
            <person name="Lapidus A."/>
            <person name="Copeland A."/>
            <person name="Nolan M."/>
            <person name="Land M."/>
            <person name="Ivanova N."/>
            <person name="Mavromatis K."/>
            <person name="Markowitz V."/>
            <person name="Kyrpides N."/>
            <person name="Melino V."/>
            <person name="Denton M."/>
            <person name="Yates R."/>
            <person name="Howieson J."/>
        </authorList>
    </citation>
    <scope>NUCLEOTIDE SEQUENCE [LARGE SCALE GENOMIC DNA]</scope>
    <source>
        <strain>WSM2304</strain>
    </source>
</reference>
<name>SYL_RHILW</name>
<keyword id="KW-0030">Aminoacyl-tRNA synthetase</keyword>
<keyword id="KW-0067">ATP-binding</keyword>
<keyword id="KW-0963">Cytoplasm</keyword>
<keyword id="KW-0436">Ligase</keyword>
<keyword id="KW-0547">Nucleotide-binding</keyword>
<keyword id="KW-0648">Protein biosynthesis</keyword>
<keyword id="KW-1185">Reference proteome</keyword>
<organism>
    <name type="scientific">Rhizobium leguminosarum bv. trifolii (strain WSM2304)</name>
    <dbReference type="NCBI Taxonomy" id="395492"/>
    <lineage>
        <taxon>Bacteria</taxon>
        <taxon>Pseudomonadati</taxon>
        <taxon>Pseudomonadota</taxon>
        <taxon>Alphaproteobacteria</taxon>
        <taxon>Hyphomicrobiales</taxon>
        <taxon>Rhizobiaceae</taxon>
        <taxon>Rhizobium/Agrobacterium group</taxon>
        <taxon>Rhizobium</taxon>
    </lineage>
</organism>
<dbReference type="EC" id="6.1.1.4" evidence="1"/>
<dbReference type="EMBL" id="CP001191">
    <property type="protein sequence ID" value="ACI57186.1"/>
    <property type="molecule type" value="Genomic_DNA"/>
</dbReference>
<dbReference type="RefSeq" id="WP_012559382.1">
    <property type="nucleotide sequence ID" value="NC_011369.1"/>
</dbReference>
<dbReference type="SMR" id="B5ZV40"/>
<dbReference type="STRING" id="395492.Rleg2_3924"/>
<dbReference type="KEGG" id="rlt:Rleg2_3924"/>
<dbReference type="eggNOG" id="COG0495">
    <property type="taxonomic scope" value="Bacteria"/>
</dbReference>
<dbReference type="HOGENOM" id="CLU_004427_0_0_5"/>
<dbReference type="Proteomes" id="UP000008330">
    <property type="component" value="Chromosome"/>
</dbReference>
<dbReference type="GO" id="GO:0005829">
    <property type="term" value="C:cytosol"/>
    <property type="evidence" value="ECO:0007669"/>
    <property type="project" value="TreeGrafter"/>
</dbReference>
<dbReference type="GO" id="GO:0002161">
    <property type="term" value="F:aminoacyl-tRNA deacylase activity"/>
    <property type="evidence" value="ECO:0007669"/>
    <property type="project" value="InterPro"/>
</dbReference>
<dbReference type="GO" id="GO:0005524">
    <property type="term" value="F:ATP binding"/>
    <property type="evidence" value="ECO:0007669"/>
    <property type="project" value="UniProtKB-UniRule"/>
</dbReference>
<dbReference type="GO" id="GO:0004823">
    <property type="term" value="F:leucine-tRNA ligase activity"/>
    <property type="evidence" value="ECO:0007669"/>
    <property type="project" value="UniProtKB-UniRule"/>
</dbReference>
<dbReference type="GO" id="GO:0006429">
    <property type="term" value="P:leucyl-tRNA aminoacylation"/>
    <property type="evidence" value="ECO:0007669"/>
    <property type="project" value="UniProtKB-UniRule"/>
</dbReference>
<dbReference type="CDD" id="cd07958">
    <property type="entry name" value="Anticodon_Ia_Leu_BEm"/>
    <property type="match status" value="1"/>
</dbReference>
<dbReference type="CDD" id="cd00812">
    <property type="entry name" value="LeuRS_core"/>
    <property type="match status" value="1"/>
</dbReference>
<dbReference type="FunFam" id="1.10.730.10:FF:000002">
    <property type="entry name" value="Leucine--tRNA ligase"/>
    <property type="match status" value="1"/>
</dbReference>
<dbReference type="FunFam" id="3.40.50.620:FF:000003">
    <property type="entry name" value="Leucine--tRNA ligase"/>
    <property type="match status" value="1"/>
</dbReference>
<dbReference type="Gene3D" id="2.20.28.290">
    <property type="match status" value="1"/>
</dbReference>
<dbReference type="Gene3D" id="3.10.20.590">
    <property type="match status" value="1"/>
</dbReference>
<dbReference type="Gene3D" id="3.40.50.620">
    <property type="entry name" value="HUPs"/>
    <property type="match status" value="2"/>
</dbReference>
<dbReference type="Gene3D" id="1.10.730.10">
    <property type="entry name" value="Isoleucyl-tRNA Synthetase, Domain 1"/>
    <property type="match status" value="1"/>
</dbReference>
<dbReference type="Gene3D" id="3.90.740.10">
    <property type="entry name" value="Valyl/Leucyl/Isoleucyl-tRNA synthetase, editing domain"/>
    <property type="match status" value="1"/>
</dbReference>
<dbReference type="HAMAP" id="MF_00049_B">
    <property type="entry name" value="Leu_tRNA_synth_B"/>
    <property type="match status" value="1"/>
</dbReference>
<dbReference type="InterPro" id="IPR001412">
    <property type="entry name" value="aa-tRNA-synth_I_CS"/>
</dbReference>
<dbReference type="InterPro" id="IPR002300">
    <property type="entry name" value="aa-tRNA-synth_Ia"/>
</dbReference>
<dbReference type="InterPro" id="IPR002302">
    <property type="entry name" value="Leu-tRNA-ligase"/>
</dbReference>
<dbReference type="InterPro" id="IPR025709">
    <property type="entry name" value="Leu_tRNA-synth_edit"/>
</dbReference>
<dbReference type="InterPro" id="IPR013155">
    <property type="entry name" value="M/V/L/I-tRNA-synth_anticd-bd"/>
</dbReference>
<dbReference type="InterPro" id="IPR015413">
    <property type="entry name" value="Methionyl/Leucyl_tRNA_Synth"/>
</dbReference>
<dbReference type="InterPro" id="IPR014729">
    <property type="entry name" value="Rossmann-like_a/b/a_fold"/>
</dbReference>
<dbReference type="InterPro" id="IPR009080">
    <property type="entry name" value="tRNAsynth_Ia_anticodon-bd"/>
</dbReference>
<dbReference type="InterPro" id="IPR009008">
    <property type="entry name" value="Val/Leu/Ile-tRNA-synth_edit"/>
</dbReference>
<dbReference type="NCBIfam" id="TIGR00396">
    <property type="entry name" value="leuS_bact"/>
    <property type="match status" value="1"/>
</dbReference>
<dbReference type="PANTHER" id="PTHR43740:SF2">
    <property type="entry name" value="LEUCINE--TRNA LIGASE, MITOCHONDRIAL"/>
    <property type="match status" value="1"/>
</dbReference>
<dbReference type="PANTHER" id="PTHR43740">
    <property type="entry name" value="LEUCYL-TRNA SYNTHETASE"/>
    <property type="match status" value="1"/>
</dbReference>
<dbReference type="Pfam" id="PF08264">
    <property type="entry name" value="Anticodon_1"/>
    <property type="match status" value="1"/>
</dbReference>
<dbReference type="Pfam" id="PF00133">
    <property type="entry name" value="tRNA-synt_1"/>
    <property type="match status" value="2"/>
</dbReference>
<dbReference type="Pfam" id="PF13603">
    <property type="entry name" value="tRNA-synt_1_2"/>
    <property type="match status" value="1"/>
</dbReference>
<dbReference type="Pfam" id="PF09334">
    <property type="entry name" value="tRNA-synt_1g"/>
    <property type="match status" value="1"/>
</dbReference>
<dbReference type="PRINTS" id="PR00985">
    <property type="entry name" value="TRNASYNTHLEU"/>
</dbReference>
<dbReference type="SUPFAM" id="SSF47323">
    <property type="entry name" value="Anticodon-binding domain of a subclass of class I aminoacyl-tRNA synthetases"/>
    <property type="match status" value="1"/>
</dbReference>
<dbReference type="SUPFAM" id="SSF52374">
    <property type="entry name" value="Nucleotidylyl transferase"/>
    <property type="match status" value="1"/>
</dbReference>
<dbReference type="SUPFAM" id="SSF50677">
    <property type="entry name" value="ValRS/IleRS/LeuRS editing domain"/>
    <property type="match status" value="1"/>
</dbReference>
<dbReference type="PROSITE" id="PS00178">
    <property type="entry name" value="AA_TRNA_LIGASE_I"/>
    <property type="match status" value="1"/>
</dbReference>
<sequence>MATERYNPRDAEPRWQQKWNEDKVFETDNSDPREKYYVLEMFPYPSGRIHMGHVRNYAMGDVVARYKRARGYNVLHPMGWDAFGMPAENAAMERGVHPASWTYQNIGSMKAQLKAMGLSLDWSREFATCDVEYYQHQQHLFLDFLEKGLVYRKQSKVNWDPVDNTVLANEQVIDGRGWRSGALVEQRELTQWFFKITDFSQDLLDALDTLDQWPEKVRLMQKNWIGRSEGLTIRWEIVAETAPAGETEITVYTTRPDTLFGASFLAIAADHPLAKDAAAKNADIEAFCEECRRAGTSLAALETAEKKGMDTGIRVRHPLDPSWELPVYVANFVLMDYGTGAIFGCPSGDQRDLDFARKYGLPVVAVVMPQDGDAASFSVGDTAYDGDGVMINSRFLDGKTTEEAFNIVADRLSAASLGNTPQGERKVNFRLRDWGISRQRYWGCPIPVIHCDDCGVVPVPKKDLPVKLPDDVTFDQPGNPLDRHPTWRHVSCPTCGKDARRETDTMDTFVDSSWYFTRFTAPWEAKPTDPEAANRWLPVDQYIGGIEHAILHLLYSRFFTRAMRETGHVAATEPFKGLFTQGMVVHETYSRGAGGSREWVAPADIRIEEIDGKRRALLLTTGEEIAIGSIEKMSKSKKNVVDPDDIIASYGADTARFFVLSDSPPERDVIWSEAGVEGAHRFTQRLWRLISEAADALSAVAPAPATEGEALSISQAAHRTLKAVENDYDKLWFNKAVARIYELVNALAAPMTRVAAGEGDATYRAAVRNAAEILIQLVAPMTPHLAEECWMALGNEGLLARTGWPQYGETLVIENDVVLPVQINGKKRAELTISRDADQNAVTNAVLDLDAVKNALNGQAPKKIIVVPQRIVNIVV</sequence>
<comment type="catalytic activity">
    <reaction evidence="1">
        <text>tRNA(Leu) + L-leucine + ATP = L-leucyl-tRNA(Leu) + AMP + diphosphate</text>
        <dbReference type="Rhea" id="RHEA:11688"/>
        <dbReference type="Rhea" id="RHEA-COMP:9613"/>
        <dbReference type="Rhea" id="RHEA-COMP:9622"/>
        <dbReference type="ChEBI" id="CHEBI:30616"/>
        <dbReference type="ChEBI" id="CHEBI:33019"/>
        <dbReference type="ChEBI" id="CHEBI:57427"/>
        <dbReference type="ChEBI" id="CHEBI:78442"/>
        <dbReference type="ChEBI" id="CHEBI:78494"/>
        <dbReference type="ChEBI" id="CHEBI:456215"/>
        <dbReference type="EC" id="6.1.1.4"/>
    </reaction>
</comment>
<comment type="subcellular location">
    <subcellularLocation>
        <location evidence="1">Cytoplasm</location>
    </subcellularLocation>
</comment>
<comment type="similarity">
    <text evidence="1">Belongs to the class-I aminoacyl-tRNA synthetase family.</text>
</comment>
<evidence type="ECO:0000255" key="1">
    <source>
        <dbReference type="HAMAP-Rule" id="MF_00049"/>
    </source>
</evidence>
<evidence type="ECO:0000256" key="2">
    <source>
        <dbReference type="SAM" id="MobiDB-lite"/>
    </source>
</evidence>
<protein>
    <recommendedName>
        <fullName evidence="1">Leucine--tRNA ligase</fullName>
        <ecNumber evidence="1">6.1.1.4</ecNumber>
    </recommendedName>
    <alternativeName>
        <fullName evidence="1">Leucyl-tRNA synthetase</fullName>
        <shortName evidence="1">LeuRS</shortName>
    </alternativeName>
</protein>
<accession>B5ZV40</accession>